<feature type="chain" id="PRO_0000245217" description="Non-histone chromosomal protein 6">
    <location>
        <begin position="1"/>
        <end position="92"/>
    </location>
</feature>
<feature type="DNA-binding region" description="HMG box" evidence="2">
    <location>
        <begin position="19"/>
        <end position="87"/>
    </location>
</feature>
<feature type="region of interest" description="Disordered" evidence="3">
    <location>
        <begin position="1"/>
        <end position="21"/>
    </location>
</feature>
<feature type="region of interest" description="Disordered" evidence="3">
    <location>
        <begin position="63"/>
        <end position="92"/>
    </location>
</feature>
<reference key="1">
    <citation type="journal article" date="2004" name="Nature">
        <title>Genome evolution in yeasts.</title>
        <authorList>
            <person name="Dujon B."/>
            <person name="Sherman D."/>
            <person name="Fischer G."/>
            <person name="Durrens P."/>
            <person name="Casaregola S."/>
            <person name="Lafontaine I."/>
            <person name="de Montigny J."/>
            <person name="Marck C."/>
            <person name="Neuveglise C."/>
            <person name="Talla E."/>
            <person name="Goffard N."/>
            <person name="Frangeul L."/>
            <person name="Aigle M."/>
            <person name="Anthouard V."/>
            <person name="Babour A."/>
            <person name="Barbe V."/>
            <person name="Barnay S."/>
            <person name="Blanchin S."/>
            <person name="Beckerich J.-M."/>
            <person name="Beyne E."/>
            <person name="Bleykasten C."/>
            <person name="Boisrame A."/>
            <person name="Boyer J."/>
            <person name="Cattolico L."/>
            <person name="Confanioleri F."/>
            <person name="de Daruvar A."/>
            <person name="Despons L."/>
            <person name="Fabre E."/>
            <person name="Fairhead C."/>
            <person name="Ferry-Dumazet H."/>
            <person name="Groppi A."/>
            <person name="Hantraye F."/>
            <person name="Hennequin C."/>
            <person name="Jauniaux N."/>
            <person name="Joyet P."/>
            <person name="Kachouri R."/>
            <person name="Kerrest A."/>
            <person name="Koszul R."/>
            <person name="Lemaire M."/>
            <person name="Lesur I."/>
            <person name="Ma L."/>
            <person name="Muller H."/>
            <person name="Nicaud J.-M."/>
            <person name="Nikolski M."/>
            <person name="Oztas S."/>
            <person name="Ozier-Kalogeropoulos O."/>
            <person name="Pellenz S."/>
            <person name="Potier S."/>
            <person name="Richard G.-F."/>
            <person name="Straub M.-L."/>
            <person name="Suleau A."/>
            <person name="Swennen D."/>
            <person name="Tekaia F."/>
            <person name="Wesolowski-Louvel M."/>
            <person name="Westhof E."/>
            <person name="Wirth B."/>
            <person name="Zeniou-Meyer M."/>
            <person name="Zivanovic Y."/>
            <person name="Bolotin-Fukuhara M."/>
            <person name="Thierry A."/>
            <person name="Bouchier C."/>
            <person name="Caudron B."/>
            <person name="Scarpelli C."/>
            <person name="Gaillardin C."/>
            <person name="Weissenbach J."/>
            <person name="Wincker P."/>
            <person name="Souciet J.-L."/>
        </authorList>
    </citation>
    <scope>NUCLEOTIDE SEQUENCE [LARGE SCALE GENOMIC DNA]</scope>
    <source>
        <strain>ATCC 36239 / CBS 767 / BCRC 21394 / JCM 1990 / NBRC 0083 / IGC 2968</strain>
    </source>
</reference>
<protein>
    <recommendedName>
        <fullName>Non-histone chromosomal protein 6</fullName>
    </recommendedName>
</protein>
<dbReference type="EMBL" id="CR382136">
    <property type="protein sequence ID" value="CAG87430.1"/>
    <property type="molecule type" value="Genomic_DNA"/>
</dbReference>
<dbReference type="RefSeq" id="XP_459256.1">
    <property type="nucleotide sequence ID" value="XM_459256.1"/>
</dbReference>
<dbReference type="SMR" id="Q6BRB4"/>
<dbReference type="FunCoup" id="Q6BRB4">
    <property type="interactions" value="464"/>
</dbReference>
<dbReference type="STRING" id="284592.Q6BRB4"/>
<dbReference type="GeneID" id="2901275"/>
<dbReference type="KEGG" id="dha:DEHA2D17710g"/>
<dbReference type="VEuPathDB" id="FungiDB:DEHA2D17710g"/>
<dbReference type="eggNOG" id="KOG0381">
    <property type="taxonomic scope" value="Eukaryota"/>
</dbReference>
<dbReference type="HOGENOM" id="CLU_082854_10_3_1"/>
<dbReference type="InParanoid" id="Q6BRB4"/>
<dbReference type="OMA" id="MKNMGGK"/>
<dbReference type="OrthoDB" id="1919336at2759"/>
<dbReference type="Proteomes" id="UP000000599">
    <property type="component" value="Chromosome D"/>
</dbReference>
<dbReference type="GO" id="GO:0005694">
    <property type="term" value="C:chromosome"/>
    <property type="evidence" value="ECO:0007669"/>
    <property type="project" value="UniProtKB-SubCell"/>
</dbReference>
<dbReference type="GO" id="GO:0005634">
    <property type="term" value="C:nucleus"/>
    <property type="evidence" value="ECO:0007669"/>
    <property type="project" value="UniProtKB-SubCell"/>
</dbReference>
<dbReference type="GO" id="GO:0003677">
    <property type="term" value="F:DNA binding"/>
    <property type="evidence" value="ECO:0007669"/>
    <property type="project" value="UniProtKB-KW"/>
</dbReference>
<dbReference type="GO" id="GO:0006281">
    <property type="term" value="P:DNA repair"/>
    <property type="evidence" value="ECO:0007669"/>
    <property type="project" value="UniProtKB-KW"/>
</dbReference>
<dbReference type="CDD" id="cd01390">
    <property type="entry name" value="HMG-box_NHP6-like"/>
    <property type="match status" value="1"/>
</dbReference>
<dbReference type="FunFam" id="1.10.30.10:FF:000016">
    <property type="entry name" value="FACT complex subunit SSRP1"/>
    <property type="match status" value="1"/>
</dbReference>
<dbReference type="Gene3D" id="1.10.30.10">
    <property type="entry name" value="High mobility group box domain"/>
    <property type="match status" value="1"/>
</dbReference>
<dbReference type="InterPro" id="IPR009071">
    <property type="entry name" value="HMG_box_dom"/>
</dbReference>
<dbReference type="InterPro" id="IPR036910">
    <property type="entry name" value="HMG_box_dom_sf"/>
</dbReference>
<dbReference type="InterPro" id="IPR050342">
    <property type="entry name" value="HMGB"/>
</dbReference>
<dbReference type="PANTHER" id="PTHR48112">
    <property type="entry name" value="HIGH MOBILITY GROUP PROTEIN DSP1"/>
    <property type="match status" value="1"/>
</dbReference>
<dbReference type="PANTHER" id="PTHR48112:SF22">
    <property type="entry name" value="MITOCHONDRIAL TRANSCRIPTION FACTOR A, ISOFORM B"/>
    <property type="match status" value="1"/>
</dbReference>
<dbReference type="Pfam" id="PF00505">
    <property type="entry name" value="HMG_box"/>
    <property type="match status" value="1"/>
</dbReference>
<dbReference type="PRINTS" id="PR00886">
    <property type="entry name" value="HIGHMOBLTY12"/>
</dbReference>
<dbReference type="SMART" id="SM00398">
    <property type="entry name" value="HMG"/>
    <property type="match status" value="1"/>
</dbReference>
<dbReference type="SUPFAM" id="SSF47095">
    <property type="entry name" value="HMG-box"/>
    <property type="match status" value="1"/>
</dbReference>
<dbReference type="PROSITE" id="PS50118">
    <property type="entry name" value="HMG_BOX_2"/>
    <property type="match status" value="1"/>
</dbReference>
<proteinExistence type="inferred from homology"/>
<accession>Q6BRB4</accession>
<comment type="function">
    <text evidence="1">DNA-binding protein that induces severe bending of DNA. Required for DNA-binding by the FACT complex, a general chromatin factor that acts to reorganize nucleosomes. The FACT complex is involved in multiple processes that require DNA as a template such as mRNA elongation, DNA replication and DNA repair. Also augments the fidelity of transcription by RNA polymerase III independently of any role in the FACT complex (By similarity).</text>
</comment>
<comment type="subunit">
    <text evidence="1">Weakly associates with the stable SPT16-POB3 heterodimer to form the FACT complex.</text>
</comment>
<comment type="subcellular location">
    <subcellularLocation>
        <location evidence="2">Nucleus</location>
    </subcellularLocation>
    <subcellularLocation>
        <location evidence="1">Chromosome</location>
    </subcellularLocation>
</comment>
<comment type="similarity">
    <text evidence="4">Belongs to the NHP6 family.</text>
</comment>
<sequence>MAPTEKKRTTRKKKDPDAPKRSLSAYMFFANENRDIVRAENPGISFGQVGKLLGEKWKALTPEDKIPYENKADTDKKRYEKEKAEYAKKNAA</sequence>
<keyword id="KW-0158">Chromosome</keyword>
<keyword id="KW-0227">DNA damage</keyword>
<keyword id="KW-0234">DNA repair</keyword>
<keyword id="KW-0238">DNA-binding</keyword>
<keyword id="KW-0539">Nucleus</keyword>
<keyword id="KW-1185">Reference proteome</keyword>
<keyword id="KW-0804">Transcription</keyword>
<keyword id="KW-0805">Transcription regulation</keyword>
<evidence type="ECO:0000250" key="1"/>
<evidence type="ECO:0000255" key="2">
    <source>
        <dbReference type="PROSITE-ProRule" id="PRU00267"/>
    </source>
</evidence>
<evidence type="ECO:0000256" key="3">
    <source>
        <dbReference type="SAM" id="MobiDB-lite"/>
    </source>
</evidence>
<evidence type="ECO:0000305" key="4"/>
<gene>
    <name type="primary">NHP6</name>
    <name type="ordered locus">DEHA2D17710g</name>
</gene>
<name>NHP6_DEBHA</name>
<organism>
    <name type="scientific">Debaryomyces hansenii (strain ATCC 36239 / CBS 767 / BCRC 21394 / JCM 1990 / NBRC 0083 / IGC 2968)</name>
    <name type="common">Yeast</name>
    <name type="synonym">Torulaspora hansenii</name>
    <dbReference type="NCBI Taxonomy" id="284592"/>
    <lineage>
        <taxon>Eukaryota</taxon>
        <taxon>Fungi</taxon>
        <taxon>Dikarya</taxon>
        <taxon>Ascomycota</taxon>
        <taxon>Saccharomycotina</taxon>
        <taxon>Pichiomycetes</taxon>
        <taxon>Debaryomycetaceae</taxon>
        <taxon>Debaryomyces</taxon>
    </lineage>
</organism>